<feature type="chain" id="PRO_0000285541" description="Sperm protein associated with the nucleus on the X chromosome N4">
    <location>
        <begin position="1"/>
        <end position="99"/>
    </location>
</feature>
<feature type="region of interest" description="Disordered" evidence="1">
    <location>
        <begin position="1"/>
        <end position="99"/>
    </location>
</feature>
<feature type="compositionally biased region" description="Polar residues" evidence="1">
    <location>
        <begin position="1"/>
        <end position="10"/>
    </location>
</feature>
<feature type="compositionally biased region" description="Basic and acidic residues" evidence="1">
    <location>
        <begin position="11"/>
        <end position="22"/>
    </location>
</feature>
<feature type="compositionally biased region" description="Basic residues" evidence="1">
    <location>
        <begin position="23"/>
        <end position="32"/>
    </location>
</feature>
<feature type="compositionally biased region" description="Polar residues" evidence="1">
    <location>
        <begin position="64"/>
        <end position="78"/>
    </location>
</feature>
<feature type="sequence variant" id="VAR_032027" description="In dbSNP:rs10482390." evidence="2">
    <original>K</original>
    <variation>N</variation>
    <location>
        <position position="48"/>
    </location>
</feature>
<keyword id="KW-1267">Proteomics identification</keyword>
<keyword id="KW-1185">Reference proteome</keyword>
<evidence type="ECO:0000256" key="1">
    <source>
        <dbReference type="SAM" id="MobiDB-lite"/>
    </source>
</evidence>
<evidence type="ECO:0000269" key="2">
    <source>
    </source>
</evidence>
<evidence type="ECO:0000305" key="3"/>
<accession>Q5MJ08</accession>
<accession>Q0ZNK6</accession>
<accession>Q5W0S6</accession>
<dbReference type="EMBL" id="AY825032">
    <property type="protein sequence ID" value="AAV97588.1"/>
    <property type="molecule type" value="Genomic_DNA"/>
</dbReference>
<dbReference type="EMBL" id="DQ336126">
    <property type="protein sequence ID" value="ABC61877.1"/>
    <property type="molecule type" value="mRNA"/>
</dbReference>
<dbReference type="EMBL" id="DQ336127">
    <property type="protein sequence ID" value="ABC61878.1"/>
    <property type="molecule type" value="mRNA"/>
</dbReference>
<dbReference type="EMBL" id="AL137840">
    <property type="status" value="NOT_ANNOTATED_CDS"/>
    <property type="molecule type" value="Genomic_DNA"/>
</dbReference>
<dbReference type="EMBL" id="BC130503">
    <property type="protein sequence ID" value="AAI30504.1"/>
    <property type="molecule type" value="mRNA"/>
</dbReference>
<dbReference type="EMBL" id="BC130505">
    <property type="protein sequence ID" value="AAI30506.1"/>
    <property type="molecule type" value="mRNA"/>
</dbReference>
<dbReference type="CCDS" id="CCDS48178.1"/>
<dbReference type="RefSeq" id="NP_001009613.1">
    <property type="nucleotide sequence ID" value="NM_001009613.4"/>
</dbReference>
<dbReference type="BioGRID" id="137551">
    <property type="interactions" value="54"/>
</dbReference>
<dbReference type="FunCoup" id="Q5MJ08">
    <property type="interactions" value="158"/>
</dbReference>
<dbReference type="IntAct" id="Q5MJ08">
    <property type="interactions" value="57"/>
</dbReference>
<dbReference type="MINT" id="Q5MJ08"/>
<dbReference type="STRING" id="9606.ENSP00000405210"/>
<dbReference type="GlyGen" id="Q5MJ08">
    <property type="glycosylation" value="1 site, 1 O-linked glycan (1 site)"/>
</dbReference>
<dbReference type="iPTMnet" id="Q5MJ08"/>
<dbReference type="PhosphoSitePlus" id="Q5MJ08"/>
<dbReference type="BioMuta" id="SPANXN4"/>
<dbReference type="DMDM" id="74706909"/>
<dbReference type="MassIVE" id="Q5MJ08"/>
<dbReference type="PaxDb" id="9606-ENSP00000405210"/>
<dbReference type="PeptideAtlas" id="Q5MJ08"/>
<dbReference type="ProteomicsDB" id="63580"/>
<dbReference type="Antibodypedia" id="52426">
    <property type="antibodies" value="11 antibodies from 7 providers"/>
</dbReference>
<dbReference type="DNASU" id="441525"/>
<dbReference type="Ensembl" id="ENST00000446864.2">
    <property type="protein sequence ID" value="ENSP00000405210.1"/>
    <property type="gene ID" value="ENSG00000189326.5"/>
</dbReference>
<dbReference type="GeneID" id="441525"/>
<dbReference type="KEGG" id="hsa:441525"/>
<dbReference type="MANE-Select" id="ENST00000446864.2">
    <property type="protein sequence ID" value="ENSP00000405210.1"/>
    <property type="RefSeq nucleotide sequence ID" value="NM_001009613.4"/>
    <property type="RefSeq protein sequence ID" value="NP_001009613.1"/>
</dbReference>
<dbReference type="UCSC" id="uc004fbv.4">
    <property type="organism name" value="human"/>
</dbReference>
<dbReference type="AGR" id="HGNC:33177"/>
<dbReference type="CTD" id="441525"/>
<dbReference type="GeneCards" id="SPANXN4"/>
<dbReference type="HGNC" id="HGNC:33177">
    <property type="gene designation" value="SPANXN4"/>
</dbReference>
<dbReference type="HPA" id="ENSG00000189326">
    <property type="expression patterns" value="Tissue enriched (testis)"/>
</dbReference>
<dbReference type="MIM" id="300667">
    <property type="type" value="gene"/>
</dbReference>
<dbReference type="neXtProt" id="NX_Q5MJ08"/>
<dbReference type="OpenTargets" id="ENSG00000189326"/>
<dbReference type="PharmGKB" id="PA162404394"/>
<dbReference type="VEuPathDB" id="HostDB:ENSG00000189326"/>
<dbReference type="eggNOG" id="ENOG502TAR9">
    <property type="taxonomic scope" value="Eukaryota"/>
</dbReference>
<dbReference type="GeneTree" id="ENSGT00940000165112"/>
<dbReference type="HOGENOM" id="CLU_140435_1_0_1"/>
<dbReference type="InParanoid" id="Q5MJ08"/>
<dbReference type="OrthoDB" id="9485840at2759"/>
<dbReference type="PAN-GO" id="Q5MJ08">
    <property type="GO annotations" value="0 GO annotations based on evolutionary models"/>
</dbReference>
<dbReference type="PhylomeDB" id="Q5MJ08"/>
<dbReference type="TreeFam" id="TF341404"/>
<dbReference type="PathwayCommons" id="Q5MJ08"/>
<dbReference type="SignaLink" id="Q5MJ08"/>
<dbReference type="BioGRID-ORCS" id="441525">
    <property type="hits" value="29 hits in 757 CRISPR screens"/>
</dbReference>
<dbReference type="GenomeRNAi" id="441525"/>
<dbReference type="Pharos" id="Q5MJ08">
    <property type="development level" value="Tdark"/>
</dbReference>
<dbReference type="PRO" id="PR:Q5MJ08"/>
<dbReference type="Proteomes" id="UP000005640">
    <property type="component" value="Chromosome X"/>
</dbReference>
<dbReference type="RNAct" id="Q5MJ08">
    <property type="molecule type" value="protein"/>
</dbReference>
<dbReference type="Bgee" id="ENSG00000189326">
    <property type="expression patterns" value="Expressed in male germ line stem cell (sensu Vertebrata) in testis and 21 other cell types or tissues"/>
</dbReference>
<dbReference type="ExpressionAtlas" id="Q5MJ08">
    <property type="expression patterns" value="baseline and differential"/>
</dbReference>
<dbReference type="InterPro" id="IPR010007">
    <property type="entry name" value="SPAN-X_fam"/>
</dbReference>
<dbReference type="Pfam" id="PF07458">
    <property type="entry name" value="SPAN-X"/>
    <property type="match status" value="1"/>
</dbReference>
<comment type="similarity">
    <text evidence="3">Belongs to the SPAN-X family.</text>
</comment>
<proteinExistence type="evidence at protein level"/>
<protein>
    <recommendedName>
        <fullName>Sperm protein associated with the nucleus on the X chromosome N4</fullName>
    </recommendedName>
    <alternativeName>
        <fullName>Nuclear-associated protein SPAN-Xn4</fullName>
        <shortName>SPANX-N4</shortName>
    </alternativeName>
    <alternativeName>
        <fullName>SPANX family member N4</fullName>
    </alternativeName>
</protein>
<name>SPXN4_HUMAN</name>
<reference key="1">
    <citation type="journal article" date="2004" name="Proc. Natl. Acad. Sci. U.S.A.">
        <title>The SPANX gene family of cancer/testis-specific antigens: rapid evolution and amplification in African great apes and hominids.</title>
        <authorList>
            <person name="Kouprina N."/>
            <person name="Mullokandov M."/>
            <person name="Rogozin I.B."/>
            <person name="Collins N.K."/>
            <person name="Solomon G."/>
            <person name="Otstot J."/>
            <person name="Risinger J.I."/>
            <person name="Koonin E.V."/>
            <person name="Barrett J.C."/>
            <person name="Larionov V."/>
        </authorList>
    </citation>
    <scope>NUCLEOTIDE SEQUENCE [GENOMIC DNA]</scope>
</reference>
<reference key="2">
    <citation type="journal article" date="2005" name="Genome Res.">
        <title>Dynamic structure of the SPANX gene cluster mapped to the prostate cancer susceptibility locus HPCX at Xq27.</title>
        <authorList>
            <person name="Kouprina N."/>
            <person name="Pavlicek A."/>
            <person name="Noskov V.N."/>
            <person name="Solomon G."/>
            <person name="Otstot J."/>
            <person name="Isaacs W."/>
            <person name="Carpten J.D."/>
            <person name="Trent J.M."/>
            <person name="Schleutker J."/>
            <person name="Barrett J.C."/>
            <person name="Jurka J."/>
            <person name="Larionov V."/>
        </authorList>
    </citation>
    <scope>NUCLEOTIDE SEQUENCE [MRNA]</scope>
    <scope>VARIANT ASN-48</scope>
</reference>
<reference key="3">
    <citation type="journal article" date="2005" name="Nature">
        <title>The DNA sequence of the human X chromosome.</title>
        <authorList>
            <person name="Ross M.T."/>
            <person name="Grafham D.V."/>
            <person name="Coffey A.J."/>
            <person name="Scherer S."/>
            <person name="McLay K."/>
            <person name="Muzny D."/>
            <person name="Platzer M."/>
            <person name="Howell G.R."/>
            <person name="Burrows C."/>
            <person name="Bird C.P."/>
            <person name="Frankish A."/>
            <person name="Lovell F.L."/>
            <person name="Howe K.L."/>
            <person name="Ashurst J.L."/>
            <person name="Fulton R.S."/>
            <person name="Sudbrak R."/>
            <person name="Wen G."/>
            <person name="Jones M.C."/>
            <person name="Hurles M.E."/>
            <person name="Andrews T.D."/>
            <person name="Scott C.E."/>
            <person name="Searle S."/>
            <person name="Ramser J."/>
            <person name="Whittaker A."/>
            <person name="Deadman R."/>
            <person name="Carter N.P."/>
            <person name="Hunt S.E."/>
            <person name="Chen R."/>
            <person name="Cree A."/>
            <person name="Gunaratne P."/>
            <person name="Havlak P."/>
            <person name="Hodgson A."/>
            <person name="Metzker M.L."/>
            <person name="Richards S."/>
            <person name="Scott G."/>
            <person name="Steffen D."/>
            <person name="Sodergren E."/>
            <person name="Wheeler D.A."/>
            <person name="Worley K.C."/>
            <person name="Ainscough R."/>
            <person name="Ambrose K.D."/>
            <person name="Ansari-Lari M.A."/>
            <person name="Aradhya S."/>
            <person name="Ashwell R.I."/>
            <person name="Babbage A.K."/>
            <person name="Bagguley C.L."/>
            <person name="Ballabio A."/>
            <person name="Banerjee R."/>
            <person name="Barker G.E."/>
            <person name="Barlow K.F."/>
            <person name="Barrett I.P."/>
            <person name="Bates K.N."/>
            <person name="Beare D.M."/>
            <person name="Beasley H."/>
            <person name="Beasley O."/>
            <person name="Beck A."/>
            <person name="Bethel G."/>
            <person name="Blechschmidt K."/>
            <person name="Brady N."/>
            <person name="Bray-Allen S."/>
            <person name="Bridgeman A.M."/>
            <person name="Brown A.J."/>
            <person name="Brown M.J."/>
            <person name="Bonnin D."/>
            <person name="Bruford E.A."/>
            <person name="Buhay C."/>
            <person name="Burch P."/>
            <person name="Burford D."/>
            <person name="Burgess J."/>
            <person name="Burrill W."/>
            <person name="Burton J."/>
            <person name="Bye J.M."/>
            <person name="Carder C."/>
            <person name="Carrel L."/>
            <person name="Chako J."/>
            <person name="Chapman J.C."/>
            <person name="Chavez D."/>
            <person name="Chen E."/>
            <person name="Chen G."/>
            <person name="Chen Y."/>
            <person name="Chen Z."/>
            <person name="Chinault C."/>
            <person name="Ciccodicola A."/>
            <person name="Clark S.Y."/>
            <person name="Clarke G."/>
            <person name="Clee C.M."/>
            <person name="Clegg S."/>
            <person name="Clerc-Blankenburg K."/>
            <person name="Clifford K."/>
            <person name="Cobley V."/>
            <person name="Cole C.G."/>
            <person name="Conquer J.S."/>
            <person name="Corby N."/>
            <person name="Connor R.E."/>
            <person name="David R."/>
            <person name="Davies J."/>
            <person name="Davis C."/>
            <person name="Davis J."/>
            <person name="Delgado O."/>
            <person name="Deshazo D."/>
            <person name="Dhami P."/>
            <person name="Ding Y."/>
            <person name="Dinh H."/>
            <person name="Dodsworth S."/>
            <person name="Draper H."/>
            <person name="Dugan-Rocha S."/>
            <person name="Dunham A."/>
            <person name="Dunn M."/>
            <person name="Durbin K.J."/>
            <person name="Dutta I."/>
            <person name="Eades T."/>
            <person name="Ellwood M."/>
            <person name="Emery-Cohen A."/>
            <person name="Errington H."/>
            <person name="Evans K.L."/>
            <person name="Faulkner L."/>
            <person name="Francis F."/>
            <person name="Frankland J."/>
            <person name="Fraser A.E."/>
            <person name="Galgoczy P."/>
            <person name="Gilbert J."/>
            <person name="Gill R."/>
            <person name="Gloeckner G."/>
            <person name="Gregory S.G."/>
            <person name="Gribble S."/>
            <person name="Griffiths C."/>
            <person name="Grocock R."/>
            <person name="Gu Y."/>
            <person name="Gwilliam R."/>
            <person name="Hamilton C."/>
            <person name="Hart E.A."/>
            <person name="Hawes A."/>
            <person name="Heath P.D."/>
            <person name="Heitmann K."/>
            <person name="Hennig S."/>
            <person name="Hernandez J."/>
            <person name="Hinzmann B."/>
            <person name="Ho S."/>
            <person name="Hoffs M."/>
            <person name="Howden P.J."/>
            <person name="Huckle E.J."/>
            <person name="Hume J."/>
            <person name="Hunt P.J."/>
            <person name="Hunt A.R."/>
            <person name="Isherwood J."/>
            <person name="Jacob L."/>
            <person name="Johnson D."/>
            <person name="Jones S."/>
            <person name="de Jong P.J."/>
            <person name="Joseph S.S."/>
            <person name="Keenan S."/>
            <person name="Kelly S."/>
            <person name="Kershaw J.K."/>
            <person name="Khan Z."/>
            <person name="Kioschis P."/>
            <person name="Klages S."/>
            <person name="Knights A.J."/>
            <person name="Kosiura A."/>
            <person name="Kovar-Smith C."/>
            <person name="Laird G.K."/>
            <person name="Langford C."/>
            <person name="Lawlor S."/>
            <person name="Leversha M."/>
            <person name="Lewis L."/>
            <person name="Liu W."/>
            <person name="Lloyd C."/>
            <person name="Lloyd D.M."/>
            <person name="Loulseged H."/>
            <person name="Loveland J.E."/>
            <person name="Lovell J.D."/>
            <person name="Lozado R."/>
            <person name="Lu J."/>
            <person name="Lyne R."/>
            <person name="Ma J."/>
            <person name="Maheshwari M."/>
            <person name="Matthews L.H."/>
            <person name="McDowall J."/>
            <person name="McLaren S."/>
            <person name="McMurray A."/>
            <person name="Meidl P."/>
            <person name="Meitinger T."/>
            <person name="Milne S."/>
            <person name="Miner G."/>
            <person name="Mistry S.L."/>
            <person name="Morgan M."/>
            <person name="Morris S."/>
            <person name="Mueller I."/>
            <person name="Mullikin J.C."/>
            <person name="Nguyen N."/>
            <person name="Nordsiek G."/>
            <person name="Nyakatura G."/>
            <person name="O'dell C.N."/>
            <person name="Okwuonu G."/>
            <person name="Palmer S."/>
            <person name="Pandian R."/>
            <person name="Parker D."/>
            <person name="Parrish J."/>
            <person name="Pasternak S."/>
            <person name="Patel D."/>
            <person name="Pearce A.V."/>
            <person name="Pearson D.M."/>
            <person name="Pelan S.E."/>
            <person name="Perez L."/>
            <person name="Porter K.M."/>
            <person name="Ramsey Y."/>
            <person name="Reichwald K."/>
            <person name="Rhodes S."/>
            <person name="Ridler K.A."/>
            <person name="Schlessinger D."/>
            <person name="Schueler M.G."/>
            <person name="Sehra H.K."/>
            <person name="Shaw-Smith C."/>
            <person name="Shen H."/>
            <person name="Sheridan E.M."/>
            <person name="Shownkeen R."/>
            <person name="Skuce C.D."/>
            <person name="Smith M.L."/>
            <person name="Sotheran E.C."/>
            <person name="Steingruber H.E."/>
            <person name="Steward C.A."/>
            <person name="Storey R."/>
            <person name="Swann R.M."/>
            <person name="Swarbreck D."/>
            <person name="Tabor P.E."/>
            <person name="Taudien S."/>
            <person name="Taylor T."/>
            <person name="Teague B."/>
            <person name="Thomas K."/>
            <person name="Thorpe A."/>
            <person name="Timms K."/>
            <person name="Tracey A."/>
            <person name="Trevanion S."/>
            <person name="Tromans A.C."/>
            <person name="d'Urso M."/>
            <person name="Verduzco D."/>
            <person name="Villasana D."/>
            <person name="Waldron L."/>
            <person name="Wall M."/>
            <person name="Wang Q."/>
            <person name="Warren J."/>
            <person name="Warry G.L."/>
            <person name="Wei X."/>
            <person name="West A."/>
            <person name="Whitehead S.L."/>
            <person name="Whiteley M.N."/>
            <person name="Wilkinson J.E."/>
            <person name="Willey D.L."/>
            <person name="Williams G."/>
            <person name="Williams L."/>
            <person name="Williamson A."/>
            <person name="Williamson H."/>
            <person name="Wilming L."/>
            <person name="Woodmansey R.L."/>
            <person name="Wray P.W."/>
            <person name="Yen J."/>
            <person name="Zhang J."/>
            <person name="Zhou J."/>
            <person name="Zoghbi H."/>
            <person name="Zorilla S."/>
            <person name="Buck D."/>
            <person name="Reinhardt R."/>
            <person name="Poustka A."/>
            <person name="Rosenthal A."/>
            <person name="Lehrach H."/>
            <person name="Meindl A."/>
            <person name="Minx P.J."/>
            <person name="Hillier L.W."/>
            <person name="Willard H.F."/>
            <person name="Wilson R.K."/>
            <person name="Waterston R.H."/>
            <person name="Rice C.M."/>
            <person name="Vaudin M."/>
            <person name="Coulson A."/>
            <person name="Nelson D.L."/>
            <person name="Weinstock G."/>
            <person name="Sulston J.E."/>
            <person name="Durbin R.M."/>
            <person name="Hubbard T."/>
            <person name="Gibbs R.A."/>
            <person name="Beck S."/>
            <person name="Rogers J."/>
            <person name="Bentley D.R."/>
        </authorList>
    </citation>
    <scope>NUCLEOTIDE SEQUENCE [LARGE SCALE GENOMIC DNA]</scope>
</reference>
<reference key="4">
    <citation type="journal article" date="2004" name="Genome Res.">
        <title>The status, quality, and expansion of the NIH full-length cDNA project: the Mammalian Gene Collection (MGC).</title>
        <authorList>
            <consortium name="The MGC Project Team"/>
        </authorList>
    </citation>
    <scope>NUCLEOTIDE SEQUENCE [LARGE SCALE MRNA]</scope>
    <source>
        <tissue>Testis</tissue>
    </source>
</reference>
<organism>
    <name type="scientific">Homo sapiens</name>
    <name type="common">Human</name>
    <dbReference type="NCBI Taxonomy" id="9606"/>
    <lineage>
        <taxon>Eukaryota</taxon>
        <taxon>Metazoa</taxon>
        <taxon>Chordata</taxon>
        <taxon>Craniata</taxon>
        <taxon>Vertebrata</taxon>
        <taxon>Euteleostomi</taxon>
        <taxon>Mammalia</taxon>
        <taxon>Eutheria</taxon>
        <taxon>Euarchontoglires</taxon>
        <taxon>Primates</taxon>
        <taxon>Haplorrhini</taxon>
        <taxon>Catarrhini</taxon>
        <taxon>Hominidae</taxon>
        <taxon>Homo</taxon>
    </lineage>
</organism>
<gene>
    <name type="primary">SPANXN4</name>
</gene>
<sequence>MEEPTSSTNENKMKSPCESNKRKVDKKKKNLHRASAPEQSLKETEKAKYPTLVFYCRKNKKRNSNQLENNQPTESSTDPIKEKGDLDISAGSPQDGGQN</sequence>